<feature type="propeptide" id="PRO_0000035677" evidence="5">
    <location>
        <begin position="1"/>
        <end position="9"/>
    </location>
</feature>
<feature type="chain" id="PRO_0000035678" description="Copper methylamine oxidase">
    <location>
        <begin position="10"/>
        <end position="648"/>
    </location>
</feature>
<feature type="region of interest" description="Disordered" evidence="4">
    <location>
        <begin position="629"/>
        <end position="648"/>
    </location>
</feature>
<feature type="active site" description="Proton acceptor" evidence="1">
    <location>
        <position position="301"/>
    </location>
</feature>
<feature type="active site" description="Schiff-base intermediate with substrate; via topaquinone" evidence="1">
    <location>
        <position position="385"/>
    </location>
</feature>
<feature type="binding site" evidence="1">
    <location>
        <begin position="299"/>
        <end position="310"/>
    </location>
    <ligand>
        <name>substrate</name>
    </ligand>
</feature>
<feature type="binding site" evidence="2">
    <location>
        <begin position="382"/>
        <end position="387"/>
    </location>
    <ligand>
        <name>substrate</name>
    </ligand>
</feature>
<feature type="binding site" evidence="1">
    <location>
        <position position="436"/>
    </location>
    <ligand>
        <name>Cu cation</name>
        <dbReference type="ChEBI" id="CHEBI:23378"/>
    </ligand>
</feature>
<feature type="binding site" evidence="1">
    <location>
        <position position="438"/>
    </location>
    <ligand>
        <name>Cu cation</name>
        <dbReference type="ChEBI" id="CHEBI:23378"/>
    </ligand>
</feature>
<feature type="binding site" evidence="3">
    <location>
        <position position="445"/>
    </location>
    <ligand>
        <name>Mn(2+)</name>
        <dbReference type="ChEBI" id="CHEBI:29035"/>
    </ligand>
</feature>
<feature type="binding site" evidence="3">
    <location>
        <position position="446"/>
    </location>
    <ligand>
        <name>Mn(2+)</name>
        <dbReference type="ChEBI" id="CHEBI:29035"/>
    </ligand>
</feature>
<feature type="binding site" evidence="3">
    <location>
        <position position="584"/>
    </location>
    <ligand>
        <name>Mn(2+)</name>
        <dbReference type="ChEBI" id="CHEBI:29035"/>
    </ligand>
</feature>
<feature type="binding site" evidence="1">
    <location>
        <position position="595"/>
    </location>
    <ligand>
        <name>Cu cation</name>
        <dbReference type="ChEBI" id="CHEBI:23378"/>
    </ligand>
</feature>
<feature type="modified residue" description="2',4',5'-topaquinone" evidence="1">
    <location>
        <position position="385"/>
    </location>
</feature>
<feature type="disulfide bond" evidence="1">
    <location>
        <begin position="320"/>
        <end position="346"/>
    </location>
</feature>
<keyword id="KW-0186">Copper</keyword>
<keyword id="KW-0903">Direct protein sequencing</keyword>
<keyword id="KW-1015">Disulfide bond</keyword>
<keyword id="KW-0464">Manganese</keyword>
<keyword id="KW-0479">Metal-binding</keyword>
<keyword id="KW-0560">Oxidoreductase</keyword>
<keyword id="KW-0801">TPQ</keyword>
<sequence length="648" mass="72806">MTLNAESEALVGVSHPLDPLSRVEIARAVAILKEGPAAAESFRFISVELREPSKDDLRAGVAVAREADAVLVDRAQARSFEAVVDLEAGTVDSWKLLAENIQPPFMLDEFAECEDACRKDPEVIAALAKRGLTNLDLVCFEPWSVGYFGEDNEGRRLMRALVFVRDEADDSPYAHPIENFIVFYDLNAGKVVRLEDDQAIPVPSARGNYLPKYVGEARTDLKPLNITQPEGASFTVTGNHVTWADWSFRVGFTPREGLVLHQLKFKDQGVDRPVINRASLSEMVVPYGDTAPVQAKKNAFDSGEYNIGNMANSLTLGCDCLGEIKYFDGHSVDSHGNPWTIENAICMHEEDDSILWKHFDFREGTAETRRSRKLVISFIATVANYEYAFYWHLFLDGSIEFLVKATGILSTAGQLPGEKNPYGQSLNNDGLYAPIHQHMFNVRMDFELDGVKNAVYEVDMEYPEHNPTGTAFMAVDRLLETEQKAIRKTNEAKHRFWKIANHESKNLVNEPVAYRLIPTNGIQLAARDDAYVSKRAQFARNNLWVTAYDRTERFAAGEYPNQATGADDGLHIWTQKDRNIVDTDLVVWYTFGMHHVVRLEDWPVMPRQNIGFMLEPHGFFNQNPTLNLPTSTSTTQTGEADTCCHTDK</sequence>
<accession>Q07123</accession>
<comment type="catalytic activity">
    <reaction evidence="2">
        <text>a primary methyl amine + O2 + H2O = an aldehyde + H2O2 + NH4(+)</text>
        <dbReference type="Rhea" id="RHEA:16153"/>
        <dbReference type="ChEBI" id="CHEBI:15377"/>
        <dbReference type="ChEBI" id="CHEBI:15379"/>
        <dbReference type="ChEBI" id="CHEBI:16240"/>
        <dbReference type="ChEBI" id="CHEBI:17478"/>
        <dbReference type="ChEBI" id="CHEBI:28938"/>
        <dbReference type="ChEBI" id="CHEBI:228804"/>
        <dbReference type="EC" id="1.4.3.21"/>
    </reaction>
</comment>
<comment type="cofactor">
    <cofactor evidence="2">
        <name>Cu cation</name>
        <dbReference type="ChEBI" id="CHEBI:23378"/>
    </cofactor>
    <cofactor evidence="1">
        <name>Zn(2+)</name>
        <dbReference type="ChEBI" id="CHEBI:29105"/>
    </cofactor>
    <text evidence="1 2">Binds 1 copper ion per subunit (By similarity). Can also use zinc ion as cofactor (By similarity).</text>
</comment>
<comment type="cofactor">
    <cofactor evidence="2">
        <name>L-topaquinone</name>
        <dbReference type="ChEBI" id="CHEBI:79027"/>
    </cofactor>
    <text evidence="2">Contains 1 topaquinone per subunit.</text>
</comment>
<comment type="cofactor">
    <cofactor evidence="3">
        <name>Mn(2+)</name>
        <dbReference type="ChEBI" id="CHEBI:29035"/>
    </cofactor>
    <text evidence="3">Binds 1 Mn(2+) ion per subunit.</text>
</comment>
<comment type="subunit">
    <text evidence="2">Homodimer.</text>
</comment>
<comment type="induction">
    <text>By methylamine.</text>
</comment>
<comment type="PTM">
    <text evidence="2">Topaquinone (TPQ) is generated by copper-dependent autoxidation of a specific tyrosyl residue.</text>
</comment>
<comment type="similarity">
    <text evidence="6">Belongs to the copper/topaquinone oxidase family.</text>
</comment>
<dbReference type="EC" id="1.4.3.21" evidence="2"/>
<dbReference type="EMBL" id="L12990">
    <property type="protein sequence ID" value="AAA22074.1"/>
    <property type="molecule type" value="Genomic_DNA"/>
</dbReference>
<dbReference type="PIR" id="A48646">
    <property type="entry name" value="A48646"/>
</dbReference>
<dbReference type="SMR" id="Q07123"/>
<dbReference type="GO" id="GO:0005507">
    <property type="term" value="F:copper ion binding"/>
    <property type="evidence" value="ECO:0007669"/>
    <property type="project" value="InterPro"/>
</dbReference>
<dbReference type="GO" id="GO:0008131">
    <property type="term" value="F:primary methylamine oxidase activity"/>
    <property type="evidence" value="ECO:0007669"/>
    <property type="project" value="UniProtKB-EC"/>
</dbReference>
<dbReference type="GO" id="GO:0048038">
    <property type="term" value="F:quinone binding"/>
    <property type="evidence" value="ECO:0007669"/>
    <property type="project" value="InterPro"/>
</dbReference>
<dbReference type="GO" id="GO:0009308">
    <property type="term" value="P:amine metabolic process"/>
    <property type="evidence" value="ECO:0007669"/>
    <property type="project" value="InterPro"/>
</dbReference>
<dbReference type="FunFam" id="2.70.98.20:FF:000001">
    <property type="entry name" value="Amine oxidase"/>
    <property type="match status" value="1"/>
</dbReference>
<dbReference type="Gene3D" id="3.10.450.40">
    <property type="match status" value="2"/>
</dbReference>
<dbReference type="Gene3D" id="2.70.98.20">
    <property type="entry name" value="Copper amine oxidase, catalytic domain"/>
    <property type="match status" value="1"/>
</dbReference>
<dbReference type="InterPro" id="IPR054157">
    <property type="entry name" value="AGAO-like_N2"/>
</dbReference>
<dbReference type="InterPro" id="IPR049947">
    <property type="entry name" value="Cu_Am_Ox_Cu-bd"/>
</dbReference>
<dbReference type="InterPro" id="IPR049948">
    <property type="entry name" value="Cu_Am_ox_TPQ-bd"/>
</dbReference>
<dbReference type="InterPro" id="IPR000269">
    <property type="entry name" value="Cu_amine_oxidase"/>
</dbReference>
<dbReference type="InterPro" id="IPR015798">
    <property type="entry name" value="Cu_amine_oxidase_C"/>
</dbReference>
<dbReference type="InterPro" id="IPR036460">
    <property type="entry name" value="Cu_amine_oxidase_C_sf"/>
</dbReference>
<dbReference type="InterPro" id="IPR016182">
    <property type="entry name" value="Cu_amine_oxidase_N-reg"/>
</dbReference>
<dbReference type="InterPro" id="IPR015802">
    <property type="entry name" value="Cu_amine_oxidase_N3"/>
</dbReference>
<dbReference type="NCBIfam" id="NF008559">
    <property type="entry name" value="PRK11504.1"/>
    <property type="match status" value="1"/>
</dbReference>
<dbReference type="PANTHER" id="PTHR10638">
    <property type="entry name" value="COPPER AMINE OXIDASE"/>
    <property type="match status" value="1"/>
</dbReference>
<dbReference type="PANTHER" id="PTHR10638:SF86">
    <property type="entry name" value="COPPER AMINE OXIDASE 1-RELATED"/>
    <property type="match status" value="1"/>
</dbReference>
<dbReference type="Pfam" id="PF21994">
    <property type="entry name" value="AGAO-like_N2"/>
    <property type="match status" value="1"/>
</dbReference>
<dbReference type="Pfam" id="PF01179">
    <property type="entry name" value="Cu_amine_oxid"/>
    <property type="match status" value="1"/>
</dbReference>
<dbReference type="Pfam" id="PF02728">
    <property type="entry name" value="Cu_amine_oxidN3"/>
    <property type="match status" value="1"/>
</dbReference>
<dbReference type="SUPFAM" id="SSF49998">
    <property type="entry name" value="Amine oxidase catalytic domain"/>
    <property type="match status" value="1"/>
</dbReference>
<dbReference type="SUPFAM" id="SSF54416">
    <property type="entry name" value="Amine oxidase N-terminal region"/>
    <property type="match status" value="2"/>
</dbReference>
<dbReference type="PROSITE" id="PS01164">
    <property type="entry name" value="COPPER_AMINE_OXID_1"/>
    <property type="match status" value="1"/>
</dbReference>
<dbReference type="PROSITE" id="PS01165">
    <property type="entry name" value="COPPER_AMINE_OXID_2"/>
    <property type="match status" value="1"/>
</dbReference>
<protein>
    <recommendedName>
        <fullName>Copper methylamine oxidase</fullName>
        <ecNumber evidence="2">1.4.3.21</ecNumber>
    </recommendedName>
    <alternativeName>
        <fullName>MAOXII</fullName>
    </alternativeName>
    <alternativeName>
        <fullName>Primary amine oxidase</fullName>
    </alternativeName>
</protein>
<proteinExistence type="evidence at protein level"/>
<name>AMO2_ARTS1</name>
<gene>
    <name type="primary">maoII</name>
</gene>
<evidence type="ECO:0000250" key="1">
    <source>
        <dbReference type="UniProtKB" id="P12807"/>
    </source>
</evidence>
<evidence type="ECO:0000250" key="2">
    <source>
        <dbReference type="UniProtKB" id="P46883"/>
    </source>
</evidence>
<evidence type="ECO:0000250" key="3">
    <source>
        <dbReference type="UniProtKB" id="Q43077"/>
    </source>
</evidence>
<evidence type="ECO:0000256" key="4">
    <source>
        <dbReference type="SAM" id="MobiDB-lite"/>
    </source>
</evidence>
<evidence type="ECO:0000269" key="5">
    <source>
    </source>
</evidence>
<evidence type="ECO:0000305" key="6"/>
<organism>
    <name type="scientific">Arthrobacter sp. (strain P1)</name>
    <dbReference type="NCBI Taxonomy" id="47915"/>
    <lineage>
        <taxon>Bacteria</taxon>
        <taxon>Bacillati</taxon>
        <taxon>Actinomycetota</taxon>
        <taxon>Actinomycetes</taxon>
        <taxon>Micrococcales</taxon>
        <taxon>Micrococcaceae</taxon>
        <taxon>Arthrobacter</taxon>
    </lineage>
</organism>
<reference key="1">
    <citation type="journal article" date="1993" name="J. Bacteriol.">
        <title>Cloning, sequencing, expression, and regulation of the structural gene for the copper/topa quinone-containing methylamine oxidase from Arthrobacter strain P1, a Gram-positive facultative methylotroph.</title>
        <authorList>
            <person name="Zhang X."/>
            <person name="Fuller J.H."/>
            <person name="McIntire W.S."/>
        </authorList>
    </citation>
    <scope>NUCLEOTIDE SEQUENCE [GENOMIC DNA]</scope>
    <scope>PROTEIN SEQUENCE OF 10-54; 358-381 AND 456-466</scope>
</reference>